<keyword id="KW-0325">Glycoprotein</keyword>
<keyword id="KW-1185">Reference proteome</keyword>
<keyword id="KW-0677">Repeat</keyword>
<keyword id="KW-0732">Signal</keyword>
<proteinExistence type="evidence at transcript level"/>
<sequence length="426" mass="44278">MAVIISSKVLLIQLFVLVLGSFSKLSHGELWLELPLPFDWPPAEIPLPDIPSPFDGPTFVLPPPSPLPSPPPPSPSPPPPSPSPPPPSTIPLIPPFTGGFLPPLPGSKLPDFAGLLPLIPNLPDVPPIGGGPPVNQPKPSSPSPLVKPPPPPPSPCKPSPPDQSAKQPPQPPPAKQPSPPPPPPPVKAPSPSPAKQPPPPPPPVKAPSPSPATQPPTKQPPPPPRAKKSPLLPPPPPVAYPPVMTPSPSPAAEPPIIAPFPSPPANPPLIPRRPAPPVVKPLPPLGKPPIVSGLVYCKSCNSYGVPTLLNASLLQGAVVKLICYGKKTMVQWATTDNKGEFRIMPKSLTTADVGKCKVYLVKSPNPNCNVPTNFNGGKSGGLLKPLLPPKQPITPAVVPVQPPMSDLYGVGPFIFEASSKMPCDKN</sequence>
<evidence type="ECO:0000255" key="1"/>
<evidence type="ECO:0000256" key="2">
    <source>
        <dbReference type="SAM" id="MobiDB-lite"/>
    </source>
</evidence>
<feature type="signal peptide">
    <location>
        <begin position="1"/>
        <end position="23"/>
    </location>
</feature>
<feature type="chain" id="PRO_0000022043" description="Pistil-specific extensin-like protein">
    <location>
        <begin position="24"/>
        <end position="426"/>
    </location>
</feature>
<feature type="repeat" description="1">
    <location>
        <begin position="69"/>
        <end position="73"/>
    </location>
</feature>
<feature type="repeat" description="2">
    <location>
        <begin position="76"/>
        <end position="80"/>
    </location>
</feature>
<feature type="repeat" description="3">
    <location>
        <begin position="83"/>
        <end position="87"/>
    </location>
</feature>
<feature type="repeat" description="4">
    <location>
        <begin position="178"/>
        <end position="182"/>
    </location>
</feature>
<feature type="region of interest" description="Disordered" evidence="2">
    <location>
        <begin position="56"/>
        <end position="109"/>
    </location>
</feature>
<feature type="region of interest" description="4 X 5 AA repeats of S-P(4)">
    <location>
        <begin position="69"/>
        <end position="182"/>
    </location>
</feature>
<feature type="region of interest" description="Disordered" evidence="2">
    <location>
        <begin position="121"/>
        <end position="254"/>
    </location>
</feature>
<feature type="compositionally biased region" description="Pro residues" evidence="2">
    <location>
        <begin position="60"/>
        <end position="94"/>
    </location>
</feature>
<feature type="compositionally biased region" description="Pro residues" evidence="2">
    <location>
        <begin position="123"/>
        <end position="161"/>
    </location>
</feature>
<feature type="compositionally biased region" description="Pro residues" evidence="2">
    <location>
        <begin position="168"/>
        <end position="224"/>
    </location>
</feature>
<feature type="compositionally biased region" description="Pro residues" evidence="2">
    <location>
        <begin position="231"/>
        <end position="254"/>
    </location>
</feature>
<feature type="glycosylation site" description="N-linked (GlcNAc...) asparagine" evidence="1">
    <location>
        <position position="310"/>
    </location>
</feature>
<name>PEXLP_TOBAC</name>
<comment type="tissue specificity">
    <text>Pistil (stigma and style tissue).</text>
</comment>
<comment type="developmental stage">
    <text>Expression begins in floral buds after pistil differentiation and levels gradually increase during flower development toward anthesis. Levels gradually decrease after pollination and are absent by the sixth day after pollination.</text>
</comment>
<organism>
    <name type="scientific">Nicotiana tabacum</name>
    <name type="common">Common tobacco</name>
    <dbReference type="NCBI Taxonomy" id="4097"/>
    <lineage>
        <taxon>Eukaryota</taxon>
        <taxon>Viridiplantae</taxon>
        <taxon>Streptophyta</taxon>
        <taxon>Embryophyta</taxon>
        <taxon>Tracheophyta</taxon>
        <taxon>Spermatophyta</taxon>
        <taxon>Magnoliopsida</taxon>
        <taxon>eudicotyledons</taxon>
        <taxon>Gunneridae</taxon>
        <taxon>Pentapetalae</taxon>
        <taxon>asterids</taxon>
        <taxon>lamiids</taxon>
        <taxon>Solanales</taxon>
        <taxon>Solanaceae</taxon>
        <taxon>Nicotianoideae</taxon>
        <taxon>Nicotianeae</taxon>
        <taxon>Nicotiana</taxon>
    </lineage>
</organism>
<accession>Q03211</accession>
<reference key="1">
    <citation type="journal article" date="1992" name="Plant Cell">
        <title>Developmental expression of tobacco pistil-specific genes encoding novel extensin-like proteins.</title>
        <authorList>
            <person name="Goldman M.H."/>
            <person name="Pezzotti M."/>
            <person name="Seurinck J."/>
            <person name="Mariani C."/>
        </authorList>
    </citation>
    <scope>NUCLEOTIDE SEQUENCE [MRNA]</scope>
    <source>
        <strain>cv. Petit Havana</strain>
        <tissue>Pistil</tissue>
    </source>
</reference>
<dbReference type="EMBL" id="Z14019">
    <property type="protein sequence ID" value="CAA78397.1"/>
    <property type="molecule type" value="mRNA"/>
</dbReference>
<dbReference type="PIR" id="JQ1696">
    <property type="entry name" value="JQ1696"/>
</dbReference>
<dbReference type="RefSeq" id="NP_001312455.1">
    <property type="nucleotide sequence ID" value="NM_001325526.1"/>
</dbReference>
<dbReference type="STRING" id="4097.Q03211"/>
<dbReference type="PaxDb" id="4097-Q03211"/>
<dbReference type="GeneID" id="107791848"/>
<dbReference type="KEGG" id="nta:107791848"/>
<dbReference type="OMA" id="FIFEAST"/>
<dbReference type="OrthoDB" id="747559at2759"/>
<dbReference type="Proteomes" id="UP000084051">
    <property type="component" value="Unplaced"/>
</dbReference>
<dbReference type="GO" id="GO:0071944">
    <property type="term" value="C:cell periphery"/>
    <property type="evidence" value="ECO:0000318"/>
    <property type="project" value="GO_Central"/>
</dbReference>
<dbReference type="InterPro" id="IPR003882">
    <property type="entry name" value="Pistil_extensin"/>
</dbReference>
<dbReference type="PANTHER" id="PTHR33470">
    <property type="entry name" value="OS01G0164075 PROTEIN"/>
    <property type="match status" value="1"/>
</dbReference>
<dbReference type="PANTHER" id="PTHR33470:SF30">
    <property type="entry name" value="PISTIL-SPECIFIC EXTENSIN-LIKE PROTEIN"/>
    <property type="match status" value="1"/>
</dbReference>
<dbReference type="Pfam" id="PF01190">
    <property type="entry name" value="Pollen_Ole_e_1"/>
    <property type="match status" value="1"/>
</dbReference>
<dbReference type="PRINTS" id="PR01218">
    <property type="entry name" value="PSTLEXTENSIN"/>
</dbReference>
<protein>
    <recommendedName>
        <fullName>Pistil-specific extensin-like protein</fullName>
        <shortName>PELP</shortName>
    </recommendedName>
</protein>